<reference key="1">
    <citation type="journal article" date="2002" name="J. Bacteriol.">
        <title>Whole-genome comparison of Mycobacterium tuberculosis clinical and laboratory strains.</title>
        <authorList>
            <person name="Fleischmann R.D."/>
            <person name="Alland D."/>
            <person name="Eisen J.A."/>
            <person name="Carpenter L."/>
            <person name="White O."/>
            <person name="Peterson J.D."/>
            <person name="DeBoy R.T."/>
            <person name="Dodson R.J."/>
            <person name="Gwinn M.L."/>
            <person name="Haft D.H."/>
            <person name="Hickey E.K."/>
            <person name="Kolonay J.F."/>
            <person name="Nelson W.C."/>
            <person name="Umayam L.A."/>
            <person name="Ermolaeva M.D."/>
            <person name="Salzberg S.L."/>
            <person name="Delcher A."/>
            <person name="Utterback T.R."/>
            <person name="Weidman J.F."/>
            <person name="Khouri H.M."/>
            <person name="Gill J."/>
            <person name="Mikula A."/>
            <person name="Bishai W."/>
            <person name="Jacobs W.R. Jr."/>
            <person name="Venter J.C."/>
            <person name="Fraser C.M."/>
        </authorList>
    </citation>
    <scope>NUCLEOTIDE SEQUENCE [LARGE SCALE GENOMIC DNA]</scope>
    <source>
        <strain>CDC 1551 / Oshkosh</strain>
    </source>
</reference>
<sequence length="105" mass="11629">MSPRRTSGGVVPVDRYRIDEGLIVVLVFAGRDERRRTVCFADKFGCVHIGNPDLYRPQTSLPQPLPISSHAISGSRFVETTNRADQQEPIGPNRAELFDQALHAG</sequence>
<organism>
    <name type="scientific">Mycobacterium tuberculosis (strain CDC 1551 / Oshkosh)</name>
    <dbReference type="NCBI Taxonomy" id="83331"/>
    <lineage>
        <taxon>Bacteria</taxon>
        <taxon>Bacillati</taxon>
        <taxon>Actinomycetota</taxon>
        <taxon>Actinomycetes</taxon>
        <taxon>Mycobacteriales</taxon>
        <taxon>Mycobacteriaceae</taxon>
        <taxon>Mycobacterium</taxon>
        <taxon>Mycobacterium tuberculosis complex</taxon>
    </lineage>
</organism>
<name>Y2644_MYCTO</name>
<dbReference type="EMBL" id="AE000516">
    <property type="status" value="NOT_ANNOTATED_CDS"/>
    <property type="molecule type" value="Genomic_DNA"/>
</dbReference>
<dbReference type="PIR" id="H70964">
    <property type="entry name" value="H70964"/>
</dbReference>
<dbReference type="Proteomes" id="UP000001020">
    <property type="component" value="Chromosome"/>
</dbReference>
<accession>P9WL52</accession>
<accession>L0TD52</accession>
<accession>P65041</accession>
<accession>P71943</accession>
<protein>
    <recommendedName>
        <fullName>Uncharacterized protein MT2721.1</fullName>
    </recommendedName>
</protein>
<proteinExistence type="predicted"/>
<feature type="chain" id="PRO_0000427539" description="Uncharacterized protein MT2721.1">
    <location>
        <begin position="1"/>
        <end position="105"/>
    </location>
</feature>
<keyword id="KW-1185">Reference proteome</keyword>
<gene>
    <name type="ordered locus">MT2721.1</name>
</gene>